<comment type="function">
    <text evidence="6">Transcriptional regulator that binds CpG, CpNpN and CpNpG (N is A, T, or C) islands in promoters regardless the DNA methylation status. Plays probably a role in gene silencing.</text>
</comment>
<comment type="interaction">
    <interactant intactId="EBI-15191715">
        <id>Q9LYB9</id>
    </interactant>
    <interactant intactId="EBI-15191765">
        <id>O81793</id>
        <label>At4g35610</label>
    </interactant>
    <organismsDiffer>false</organismsDiffer>
    <experiments>5</experiments>
</comment>
<comment type="interaction">
    <interactant intactId="EBI-15191715">
        <id>Q9LYB9</id>
    </interactant>
    <interactant intactId="EBI-15193831">
        <id>F4K5T4</id>
        <label>At5g28040</label>
    </interactant>
    <organismsDiffer>false</organismsDiffer>
    <experiments>3</experiments>
</comment>
<comment type="interaction">
    <interactant intactId="EBI-15191715">
        <id>Q9LYB9</id>
    </interactant>
    <interactant intactId="EBI-4447483">
        <id>O81801</id>
        <label>DAZ3</label>
    </interactant>
    <organismsDiffer>false</organismsDiffer>
    <experiments>5</experiments>
</comment>
<comment type="interaction">
    <interactant intactId="EBI-15191715">
        <id>Q9LYB9</id>
    </interactant>
    <interactant intactId="EBI-632343">
        <id>P49678</id>
        <label>IAA2</label>
    </interactant>
    <organismsDiffer>false</organismsDiffer>
    <experiments>4</experiments>
</comment>
<comment type="subcellular location">
    <subcellularLocation>
        <location evidence="6">Nucleus</location>
    </subcellularLocation>
</comment>
<comment type="tissue specificity">
    <text evidence="5 7">Expressed in rosette leaves, buds, flowers, stems, mature seeds and roots.</text>
</comment>
<comment type="domain">
    <text evidence="1">The methyl-CpG-binding domain (MBD) functions both in binding to methylated DNA and in protein interactions.</text>
</comment>
<proteinExistence type="evidence at protein level"/>
<name>MBD4_ARATH</name>
<organism>
    <name type="scientific">Arabidopsis thaliana</name>
    <name type="common">Mouse-ear cress</name>
    <dbReference type="NCBI Taxonomy" id="3702"/>
    <lineage>
        <taxon>Eukaryota</taxon>
        <taxon>Viridiplantae</taxon>
        <taxon>Streptophyta</taxon>
        <taxon>Embryophyta</taxon>
        <taxon>Tracheophyta</taxon>
        <taxon>Spermatophyta</taxon>
        <taxon>Magnoliopsida</taxon>
        <taxon>eudicotyledons</taxon>
        <taxon>Gunneridae</taxon>
        <taxon>Pentapetalae</taxon>
        <taxon>rosids</taxon>
        <taxon>malvids</taxon>
        <taxon>Brassicales</taxon>
        <taxon>Brassicaceae</taxon>
        <taxon>Camelineae</taxon>
        <taxon>Arabidopsis</taxon>
    </lineage>
</organism>
<reference key="1">
    <citation type="journal article" date="2000" name="Nature">
        <title>Sequence and analysis of chromosome 3 of the plant Arabidopsis thaliana.</title>
        <authorList>
            <person name="Salanoubat M."/>
            <person name="Lemcke K."/>
            <person name="Rieger M."/>
            <person name="Ansorge W."/>
            <person name="Unseld M."/>
            <person name="Fartmann B."/>
            <person name="Valle G."/>
            <person name="Bloecker H."/>
            <person name="Perez-Alonso M."/>
            <person name="Obermaier B."/>
            <person name="Delseny M."/>
            <person name="Boutry M."/>
            <person name="Grivell L.A."/>
            <person name="Mache R."/>
            <person name="Puigdomenech P."/>
            <person name="De Simone V."/>
            <person name="Choisne N."/>
            <person name="Artiguenave F."/>
            <person name="Robert C."/>
            <person name="Brottier P."/>
            <person name="Wincker P."/>
            <person name="Cattolico L."/>
            <person name="Weissenbach J."/>
            <person name="Saurin W."/>
            <person name="Quetier F."/>
            <person name="Schaefer M."/>
            <person name="Mueller-Auer S."/>
            <person name="Gabel C."/>
            <person name="Fuchs M."/>
            <person name="Benes V."/>
            <person name="Wurmbach E."/>
            <person name="Drzonek H."/>
            <person name="Erfle H."/>
            <person name="Jordan N."/>
            <person name="Bangert S."/>
            <person name="Wiedelmann R."/>
            <person name="Kranz H."/>
            <person name="Voss H."/>
            <person name="Holland R."/>
            <person name="Brandt P."/>
            <person name="Nyakatura G."/>
            <person name="Vezzi A."/>
            <person name="D'Angelo M."/>
            <person name="Pallavicini A."/>
            <person name="Toppo S."/>
            <person name="Simionati B."/>
            <person name="Conrad A."/>
            <person name="Hornischer K."/>
            <person name="Kauer G."/>
            <person name="Loehnert T.-H."/>
            <person name="Nordsiek G."/>
            <person name="Reichelt J."/>
            <person name="Scharfe M."/>
            <person name="Schoen O."/>
            <person name="Bargues M."/>
            <person name="Terol J."/>
            <person name="Climent J."/>
            <person name="Navarro P."/>
            <person name="Collado C."/>
            <person name="Perez-Perez A."/>
            <person name="Ottenwaelder B."/>
            <person name="Duchemin D."/>
            <person name="Cooke R."/>
            <person name="Laudie M."/>
            <person name="Berger-Llauro C."/>
            <person name="Purnelle B."/>
            <person name="Masuy D."/>
            <person name="de Haan M."/>
            <person name="Maarse A.C."/>
            <person name="Alcaraz J.-P."/>
            <person name="Cottet A."/>
            <person name="Casacuberta E."/>
            <person name="Monfort A."/>
            <person name="Argiriou A."/>
            <person name="Flores M."/>
            <person name="Liguori R."/>
            <person name="Vitale D."/>
            <person name="Mannhaupt G."/>
            <person name="Haase D."/>
            <person name="Schoof H."/>
            <person name="Rudd S."/>
            <person name="Zaccaria P."/>
            <person name="Mewes H.-W."/>
            <person name="Mayer K.F.X."/>
            <person name="Kaul S."/>
            <person name="Town C.D."/>
            <person name="Koo H.L."/>
            <person name="Tallon L.J."/>
            <person name="Jenkins J."/>
            <person name="Rooney T."/>
            <person name="Rizzo M."/>
            <person name="Walts A."/>
            <person name="Utterback T."/>
            <person name="Fujii C.Y."/>
            <person name="Shea T.P."/>
            <person name="Creasy T.H."/>
            <person name="Haas B."/>
            <person name="Maiti R."/>
            <person name="Wu D."/>
            <person name="Peterson J."/>
            <person name="Van Aken S."/>
            <person name="Pai G."/>
            <person name="Militscher J."/>
            <person name="Sellers P."/>
            <person name="Gill J.E."/>
            <person name="Feldblyum T.V."/>
            <person name="Preuss D."/>
            <person name="Lin X."/>
            <person name="Nierman W.C."/>
            <person name="Salzberg S.L."/>
            <person name="White O."/>
            <person name="Venter J.C."/>
            <person name="Fraser C.M."/>
            <person name="Kaneko T."/>
            <person name="Nakamura Y."/>
            <person name="Sato S."/>
            <person name="Kato T."/>
            <person name="Asamizu E."/>
            <person name="Sasamoto S."/>
            <person name="Kimura T."/>
            <person name="Idesawa K."/>
            <person name="Kawashima K."/>
            <person name="Kishida Y."/>
            <person name="Kiyokawa C."/>
            <person name="Kohara M."/>
            <person name="Matsumoto M."/>
            <person name="Matsuno A."/>
            <person name="Muraki A."/>
            <person name="Nakayama S."/>
            <person name="Nakazaki N."/>
            <person name="Shinpo S."/>
            <person name="Takeuchi C."/>
            <person name="Wada T."/>
            <person name="Watanabe A."/>
            <person name="Yamada M."/>
            <person name="Yasuda M."/>
            <person name="Tabata S."/>
        </authorList>
    </citation>
    <scope>NUCLEOTIDE SEQUENCE [LARGE SCALE GENOMIC DNA]</scope>
    <source>
        <strain>cv. Columbia</strain>
    </source>
</reference>
<reference key="2">
    <citation type="journal article" date="2017" name="Plant J.">
        <title>Araport11: a complete reannotation of the Arabidopsis thaliana reference genome.</title>
        <authorList>
            <person name="Cheng C.Y."/>
            <person name="Krishnakumar V."/>
            <person name="Chan A.P."/>
            <person name="Thibaud-Nissen F."/>
            <person name="Schobel S."/>
            <person name="Town C.D."/>
        </authorList>
    </citation>
    <scope>GENOME REANNOTATION</scope>
    <source>
        <strain>cv. Columbia</strain>
    </source>
</reference>
<reference key="3">
    <citation type="journal article" date="2003" name="Science">
        <title>Empirical analysis of transcriptional activity in the Arabidopsis genome.</title>
        <authorList>
            <person name="Yamada K."/>
            <person name="Lim J."/>
            <person name="Dale J.M."/>
            <person name="Chen H."/>
            <person name="Shinn P."/>
            <person name="Palm C.J."/>
            <person name="Southwick A.M."/>
            <person name="Wu H.C."/>
            <person name="Kim C.J."/>
            <person name="Nguyen M."/>
            <person name="Pham P.K."/>
            <person name="Cheuk R.F."/>
            <person name="Karlin-Newmann G."/>
            <person name="Liu S.X."/>
            <person name="Lam B."/>
            <person name="Sakano H."/>
            <person name="Wu T."/>
            <person name="Yu G."/>
            <person name="Miranda M."/>
            <person name="Quach H.L."/>
            <person name="Tripp M."/>
            <person name="Chang C.H."/>
            <person name="Lee J.M."/>
            <person name="Toriumi M.J."/>
            <person name="Chan M.M."/>
            <person name="Tang C.C."/>
            <person name="Onodera C.S."/>
            <person name="Deng J.M."/>
            <person name="Akiyama K."/>
            <person name="Ansari Y."/>
            <person name="Arakawa T."/>
            <person name="Banh J."/>
            <person name="Banno F."/>
            <person name="Bowser L."/>
            <person name="Brooks S.Y."/>
            <person name="Carninci P."/>
            <person name="Chao Q."/>
            <person name="Choy N."/>
            <person name="Enju A."/>
            <person name="Goldsmith A.D."/>
            <person name="Gurjal M."/>
            <person name="Hansen N.F."/>
            <person name="Hayashizaki Y."/>
            <person name="Johnson-Hopson C."/>
            <person name="Hsuan V.W."/>
            <person name="Iida K."/>
            <person name="Karnes M."/>
            <person name="Khan S."/>
            <person name="Koesema E."/>
            <person name="Ishida J."/>
            <person name="Jiang P.X."/>
            <person name="Jones T."/>
            <person name="Kawai J."/>
            <person name="Kamiya A."/>
            <person name="Meyers C."/>
            <person name="Nakajima M."/>
            <person name="Narusaka M."/>
            <person name="Seki M."/>
            <person name="Sakurai T."/>
            <person name="Satou M."/>
            <person name="Tamse R."/>
            <person name="Vaysberg M."/>
            <person name="Wallender E.K."/>
            <person name="Wong C."/>
            <person name="Yamamura Y."/>
            <person name="Yuan S."/>
            <person name="Shinozaki K."/>
            <person name="Davis R.W."/>
            <person name="Theologis A."/>
            <person name="Ecker J.R."/>
        </authorList>
    </citation>
    <scope>NUCLEOTIDE SEQUENCE [LARGE SCALE MRNA]</scope>
    <source>
        <strain>cv. Columbia</strain>
    </source>
</reference>
<reference key="4">
    <citation type="submission" date="2004-09" db="EMBL/GenBank/DDBJ databases">
        <title>Large-scale analysis of RIKEN Arabidopsis full-length (RAFL) cDNAs.</title>
        <authorList>
            <person name="Totoki Y."/>
            <person name="Seki M."/>
            <person name="Ishida J."/>
            <person name="Nakajima M."/>
            <person name="Enju A."/>
            <person name="Kamiya A."/>
            <person name="Narusaka M."/>
            <person name="Shin-i T."/>
            <person name="Nakagawa M."/>
            <person name="Sakamoto N."/>
            <person name="Oishi K."/>
            <person name="Kohara Y."/>
            <person name="Kobayashi M."/>
            <person name="Toyoda A."/>
            <person name="Sakaki Y."/>
            <person name="Sakurai T."/>
            <person name="Iida K."/>
            <person name="Akiyama K."/>
            <person name="Satou M."/>
            <person name="Toyoda T."/>
            <person name="Konagaya A."/>
            <person name="Carninci P."/>
            <person name="Kawai J."/>
            <person name="Hayashizaki Y."/>
            <person name="Shinozaki K."/>
        </authorList>
    </citation>
    <scope>NUCLEOTIDE SEQUENCE [LARGE SCALE MRNA]</scope>
    <source>
        <strain>cv. Columbia</strain>
    </source>
</reference>
<reference key="5">
    <citation type="journal article" date="2003" name="Nucleic Acids Res.">
        <title>Ten members of the Arabidopsis gene family encoding methyl-CpG-binding domain proteins are transcriptionally active and at least one, AtMBD11, is crucial for normal development.</title>
        <authorList>
            <person name="Berg A."/>
            <person name="Meza T.J."/>
            <person name="Mahic M."/>
            <person name="Thorstensen T."/>
            <person name="Kristiansen K."/>
            <person name="Aalen R.B."/>
        </authorList>
    </citation>
    <scope>MAD MOTIF</scope>
    <scope>TISSUE SPECIFICITY</scope>
    <scope>GENE FAMILY</scope>
    <scope>NOMENCLATURE</scope>
</reference>
<reference key="6">
    <citation type="journal article" date="2003" name="Plant Mol. Biol.">
        <title>Arabidopsis MBD proteins show different binding specificities and nuclear localization.</title>
        <authorList>
            <person name="Scebba F."/>
            <person name="Bernacchia G."/>
            <person name="De Bastiani M."/>
            <person name="Evangelista M."/>
            <person name="Cantoni R.M."/>
            <person name="Cella R."/>
            <person name="Locci M.T."/>
            <person name="Pitto L."/>
        </authorList>
    </citation>
    <scope>TISSUE SPECIFICITY</scope>
    <source>
        <strain>cv. Columbia</strain>
    </source>
</reference>
<reference key="7">
    <citation type="journal article" date="2003" name="Plant Physiol.">
        <title>Methylated DNA-binding proteins from Arabidopsis.</title>
        <authorList>
            <person name="Ito M."/>
            <person name="Koike A."/>
            <person name="Koizumi N."/>
            <person name="Sano H."/>
        </authorList>
    </citation>
    <scope>FUNCTION</scope>
    <scope>SUBCELLULAR LOCATION</scope>
</reference>
<reference key="8">
    <citation type="journal article" date="2005" name="Plant Physiol.">
        <title>Evolutionary divergence of monocot and dicot methyl-CpG-binding domain proteins.</title>
        <authorList>
            <person name="Springer N.M."/>
            <person name="Kaeppler S.M."/>
        </authorList>
    </citation>
    <scope>GENE FAMILY</scope>
</reference>
<reference key="9">
    <citation type="journal article" date="2007" name="Trends Plant Sci.">
        <title>Methyl-CpG-binding domain proteins in plants: interpreters of DNA methylation.</title>
        <authorList>
            <person name="Zemach A."/>
            <person name="Grafi G."/>
        </authorList>
    </citation>
    <scope>REVIEW</scope>
</reference>
<sequence>MKEEEEIGKPAKPKAKKDVAPGRLIDTYAAQCDNCHKWRVIDSQEEYEDIRSKMLEDPFNCQKKQGMSCEEPADIDYDSSRTWVIDKPGLPKTPKGFKRSLVLRKDYSKMDTYYFTPTGKKLRSRNEIAAFVEANPEFRNAPLGDFNFTVPKVMEDTVPPDPKLGSPFPSTTTTTSEKSSVKQSHN</sequence>
<feature type="chain" id="PRO_0000405280" description="Methyl-CpG-binding domain-containing protein 4">
    <location>
        <begin position="1"/>
        <end position="186"/>
    </location>
</feature>
<feature type="domain" description="MBD" evidence="2">
    <location>
        <begin position="83"/>
        <end position="153"/>
    </location>
</feature>
<feature type="zinc finger region" description="CW-type" evidence="3">
    <location>
        <begin position="22"/>
        <end position="77"/>
    </location>
</feature>
<feature type="region of interest" description="Disordered" evidence="4">
    <location>
        <begin position="154"/>
        <end position="186"/>
    </location>
</feature>
<feature type="short sequence motif" description="MBD-associated domain (MAD)">
    <location>
        <begin position="31"/>
        <end position="69"/>
    </location>
</feature>
<feature type="compositionally biased region" description="Low complexity" evidence="4">
    <location>
        <begin position="166"/>
        <end position="178"/>
    </location>
</feature>
<feature type="binding site" evidence="3">
    <location>
        <position position="32"/>
    </location>
    <ligand>
        <name>Zn(2+)</name>
        <dbReference type="ChEBI" id="CHEBI:29105"/>
    </ligand>
</feature>
<feature type="binding site" evidence="3">
    <location>
        <position position="35"/>
    </location>
    <ligand>
        <name>Zn(2+)</name>
        <dbReference type="ChEBI" id="CHEBI:29105"/>
    </ligand>
</feature>
<feature type="binding site" evidence="3">
    <location>
        <position position="61"/>
    </location>
    <ligand>
        <name>Zn(2+)</name>
        <dbReference type="ChEBI" id="CHEBI:29105"/>
    </ligand>
</feature>
<feature type="binding site" evidence="3">
    <location>
        <position position="69"/>
    </location>
    <ligand>
        <name>Zn(2+)</name>
        <dbReference type="ChEBI" id="CHEBI:29105"/>
    </ligand>
</feature>
<evidence type="ECO:0000250" key="1"/>
<evidence type="ECO:0000255" key="2">
    <source>
        <dbReference type="PROSITE-ProRule" id="PRU00338"/>
    </source>
</evidence>
<evidence type="ECO:0000255" key="3">
    <source>
        <dbReference type="PROSITE-ProRule" id="PRU00454"/>
    </source>
</evidence>
<evidence type="ECO:0000256" key="4">
    <source>
        <dbReference type="SAM" id="MobiDB-lite"/>
    </source>
</evidence>
<evidence type="ECO:0000269" key="5">
    <source>
    </source>
</evidence>
<evidence type="ECO:0000269" key="6">
    <source>
    </source>
</evidence>
<evidence type="ECO:0000269" key="7">
    <source>
    </source>
</evidence>
<accession>Q9LYB9</accession>
<protein>
    <recommendedName>
        <fullName>Methyl-CpG-binding domain-containing protein 4</fullName>
        <shortName>AtMBD4</shortName>
        <shortName>MBD04</shortName>
    </recommendedName>
    <alternativeName>
        <fullName>Methyl-CpG-binding protein MBD4</fullName>
    </alternativeName>
</protein>
<dbReference type="EMBL" id="AL163816">
    <property type="protein sequence ID" value="CAB87748.1"/>
    <property type="molecule type" value="Genomic_DNA"/>
</dbReference>
<dbReference type="EMBL" id="CP002686">
    <property type="protein sequence ID" value="AEE80426.1"/>
    <property type="molecule type" value="Genomic_DNA"/>
</dbReference>
<dbReference type="EMBL" id="BT010516">
    <property type="protein sequence ID" value="AAQ65139.1"/>
    <property type="molecule type" value="mRNA"/>
</dbReference>
<dbReference type="EMBL" id="AK176600">
    <property type="protein sequence ID" value="BAD44363.1"/>
    <property type="molecule type" value="mRNA"/>
</dbReference>
<dbReference type="PIR" id="T48092">
    <property type="entry name" value="T48092"/>
</dbReference>
<dbReference type="RefSeq" id="NP_191862.1">
    <property type="nucleotide sequence ID" value="NM_116168.5"/>
</dbReference>
<dbReference type="SMR" id="Q9LYB9"/>
<dbReference type="BioGRID" id="10792">
    <property type="interactions" value="11"/>
</dbReference>
<dbReference type="FunCoup" id="Q9LYB9">
    <property type="interactions" value="163"/>
</dbReference>
<dbReference type="IntAct" id="Q9LYB9">
    <property type="interactions" value="11"/>
</dbReference>
<dbReference type="STRING" id="3702.Q9LYB9"/>
<dbReference type="iPTMnet" id="Q9LYB9"/>
<dbReference type="PaxDb" id="3702-AT3G63030.1"/>
<dbReference type="ProteomicsDB" id="238287"/>
<dbReference type="EnsemblPlants" id="AT3G63030.1">
    <property type="protein sequence ID" value="AT3G63030.1"/>
    <property type="gene ID" value="AT3G63030"/>
</dbReference>
<dbReference type="GeneID" id="825478"/>
<dbReference type="Gramene" id="AT3G63030.1">
    <property type="protein sequence ID" value="AT3G63030.1"/>
    <property type="gene ID" value="AT3G63030"/>
</dbReference>
<dbReference type="KEGG" id="ath:AT3G63030"/>
<dbReference type="Araport" id="AT3G63030"/>
<dbReference type="TAIR" id="AT3G63030">
    <property type="gene designation" value="MBD4"/>
</dbReference>
<dbReference type="eggNOG" id="KOG4161">
    <property type="taxonomic scope" value="Eukaryota"/>
</dbReference>
<dbReference type="HOGENOM" id="CLU_109577_1_0_1"/>
<dbReference type="InParanoid" id="Q9LYB9"/>
<dbReference type="OMA" id="NCLKWRV"/>
<dbReference type="OrthoDB" id="10072024at2759"/>
<dbReference type="PhylomeDB" id="Q9LYB9"/>
<dbReference type="PRO" id="PR:Q9LYB9"/>
<dbReference type="Proteomes" id="UP000006548">
    <property type="component" value="Chromosome 3"/>
</dbReference>
<dbReference type="ExpressionAtlas" id="Q9LYB9">
    <property type="expression patterns" value="baseline and differential"/>
</dbReference>
<dbReference type="GO" id="GO:0000118">
    <property type="term" value="C:histone deacetylase complex"/>
    <property type="evidence" value="ECO:0000314"/>
    <property type="project" value="TAIR"/>
</dbReference>
<dbReference type="GO" id="GO:0005634">
    <property type="term" value="C:nucleus"/>
    <property type="evidence" value="ECO:0000314"/>
    <property type="project" value="UniProtKB"/>
</dbReference>
<dbReference type="GO" id="GO:0008327">
    <property type="term" value="F:methyl-CpG binding"/>
    <property type="evidence" value="ECO:0000250"/>
    <property type="project" value="TAIR"/>
</dbReference>
<dbReference type="GO" id="GO:0008270">
    <property type="term" value="F:zinc ion binding"/>
    <property type="evidence" value="ECO:0007669"/>
    <property type="project" value="UniProtKB-KW"/>
</dbReference>
<dbReference type="CDD" id="cd01396">
    <property type="entry name" value="MeCP2_MBD"/>
    <property type="match status" value="1"/>
</dbReference>
<dbReference type="FunFam" id="3.30.890.10:FF:000012">
    <property type="entry name" value="Methyl-CpG-binding domain-containing protein 1"/>
    <property type="match status" value="1"/>
</dbReference>
<dbReference type="Gene3D" id="3.30.40.100">
    <property type="match status" value="1"/>
</dbReference>
<dbReference type="Gene3D" id="3.30.890.10">
    <property type="entry name" value="Methyl-cpg-binding Protein 2, Chain A"/>
    <property type="match status" value="1"/>
</dbReference>
<dbReference type="InterPro" id="IPR016177">
    <property type="entry name" value="DNA-bd_dom_sf"/>
</dbReference>
<dbReference type="InterPro" id="IPR001739">
    <property type="entry name" value="Methyl_CpG_DNA-bd"/>
</dbReference>
<dbReference type="InterPro" id="IPR011124">
    <property type="entry name" value="Znf_CW"/>
</dbReference>
<dbReference type="PANTHER" id="PTHR12396">
    <property type="entry name" value="METHYL-CPG BINDING PROTEIN, MBD"/>
    <property type="match status" value="1"/>
</dbReference>
<dbReference type="PANTHER" id="PTHR12396:SF10">
    <property type="entry name" value="METHYL-CPG-BINDING DOMAIN-CONTAINING PROTEIN 1-RELATED"/>
    <property type="match status" value="1"/>
</dbReference>
<dbReference type="Pfam" id="PF01429">
    <property type="entry name" value="MBD"/>
    <property type="match status" value="1"/>
</dbReference>
<dbReference type="Pfam" id="PF07496">
    <property type="entry name" value="zf-CW"/>
    <property type="match status" value="1"/>
</dbReference>
<dbReference type="SMART" id="SM00391">
    <property type="entry name" value="MBD"/>
    <property type="match status" value="1"/>
</dbReference>
<dbReference type="SUPFAM" id="SSF54171">
    <property type="entry name" value="DNA-binding domain"/>
    <property type="match status" value="1"/>
</dbReference>
<dbReference type="PROSITE" id="PS50982">
    <property type="entry name" value="MBD"/>
    <property type="match status" value="1"/>
</dbReference>
<dbReference type="PROSITE" id="PS51050">
    <property type="entry name" value="ZF_CW"/>
    <property type="match status" value="1"/>
</dbReference>
<keyword id="KW-0238">DNA-binding</keyword>
<keyword id="KW-0479">Metal-binding</keyword>
<keyword id="KW-0539">Nucleus</keyword>
<keyword id="KW-1185">Reference proteome</keyword>
<keyword id="KW-0804">Transcription</keyword>
<keyword id="KW-0805">Transcription regulation</keyword>
<keyword id="KW-0862">Zinc</keyword>
<keyword id="KW-0863">Zinc-finger</keyword>
<gene>
    <name type="primary">MBD4</name>
    <name type="ordered locus">At3g63030</name>
    <name type="ORF">T20O10.130</name>
</gene>